<dbReference type="EC" id="3.6.1.27" evidence="1"/>
<dbReference type="EMBL" id="CP000786">
    <property type="protein sequence ID" value="ABZ97927.1"/>
    <property type="molecule type" value="Genomic_DNA"/>
</dbReference>
<dbReference type="RefSeq" id="WP_012388805.1">
    <property type="nucleotide sequence ID" value="NC_010602.1"/>
</dbReference>
<dbReference type="SMR" id="B0SS37"/>
<dbReference type="STRING" id="456481.LEPBI_I1821"/>
<dbReference type="KEGG" id="lbi:LEPBI_I1821"/>
<dbReference type="HOGENOM" id="CLU_060296_2_0_12"/>
<dbReference type="OrthoDB" id="9808289at2"/>
<dbReference type="BioCyc" id="LBIF456481:LEPBI_RS09000-MONOMER"/>
<dbReference type="Proteomes" id="UP000001847">
    <property type="component" value="Chromosome I"/>
</dbReference>
<dbReference type="GO" id="GO:0005886">
    <property type="term" value="C:plasma membrane"/>
    <property type="evidence" value="ECO:0007669"/>
    <property type="project" value="UniProtKB-SubCell"/>
</dbReference>
<dbReference type="GO" id="GO:0050380">
    <property type="term" value="F:undecaprenyl-diphosphatase activity"/>
    <property type="evidence" value="ECO:0007669"/>
    <property type="project" value="UniProtKB-UniRule"/>
</dbReference>
<dbReference type="GO" id="GO:0071555">
    <property type="term" value="P:cell wall organization"/>
    <property type="evidence" value="ECO:0007669"/>
    <property type="project" value="UniProtKB-KW"/>
</dbReference>
<dbReference type="GO" id="GO:0009252">
    <property type="term" value="P:peptidoglycan biosynthetic process"/>
    <property type="evidence" value="ECO:0007669"/>
    <property type="project" value="UniProtKB-KW"/>
</dbReference>
<dbReference type="GO" id="GO:0008360">
    <property type="term" value="P:regulation of cell shape"/>
    <property type="evidence" value="ECO:0007669"/>
    <property type="project" value="UniProtKB-KW"/>
</dbReference>
<dbReference type="GO" id="GO:0046677">
    <property type="term" value="P:response to antibiotic"/>
    <property type="evidence" value="ECO:0007669"/>
    <property type="project" value="UniProtKB-UniRule"/>
</dbReference>
<dbReference type="HAMAP" id="MF_01006">
    <property type="entry name" value="Undec_diphosphatase"/>
    <property type="match status" value="1"/>
</dbReference>
<dbReference type="InterPro" id="IPR003824">
    <property type="entry name" value="UppP"/>
</dbReference>
<dbReference type="PANTHER" id="PTHR30622">
    <property type="entry name" value="UNDECAPRENYL-DIPHOSPHATASE"/>
    <property type="match status" value="1"/>
</dbReference>
<dbReference type="PANTHER" id="PTHR30622:SF3">
    <property type="entry name" value="UNDECAPRENYL-DIPHOSPHATASE"/>
    <property type="match status" value="1"/>
</dbReference>
<dbReference type="Pfam" id="PF02673">
    <property type="entry name" value="BacA"/>
    <property type="match status" value="1"/>
</dbReference>
<accession>B0SS37</accession>
<sequence length="279" mass="31616">MDNTLNAFLRGIIEAATEFLPVSSTGHLFLFSYFFPFQNLSVPHEAFEDLFDIFIQTGAILSVVVLYYKTLWSHLVEAVRFGLGKSTDRSGFQFYLNLIVGILPILILGFLLKSQLDQIKMRSDLLLILGMSWFVGGIIMVFVEKRHLDESSGKTIGFKESIIVGFLQCFALIPGVSRSAATIISARTMGVSKKDSAEFSFFLAIPVLTLAGIYKLYKHRQILNSETIGLLLFGSIISFIICYFIIRLFMAFIRRRSFISFGVYRILLGLLVILYFVRY</sequence>
<reference key="1">
    <citation type="journal article" date="2008" name="PLoS ONE">
        <title>Genome sequence of the saprophyte Leptospira biflexa provides insights into the evolution of Leptospira and the pathogenesis of leptospirosis.</title>
        <authorList>
            <person name="Picardeau M."/>
            <person name="Bulach D.M."/>
            <person name="Bouchier C."/>
            <person name="Zuerner R.L."/>
            <person name="Zidane N."/>
            <person name="Wilson P.J."/>
            <person name="Creno S."/>
            <person name="Kuczek E.S."/>
            <person name="Bommezzadri S."/>
            <person name="Davis J.C."/>
            <person name="McGrath A."/>
            <person name="Johnson M.J."/>
            <person name="Boursaux-Eude C."/>
            <person name="Seemann T."/>
            <person name="Rouy Z."/>
            <person name="Coppel R.L."/>
            <person name="Rood J.I."/>
            <person name="Lajus A."/>
            <person name="Davies J.K."/>
            <person name="Medigue C."/>
            <person name="Adler B."/>
        </authorList>
    </citation>
    <scope>NUCLEOTIDE SEQUENCE [LARGE SCALE GENOMIC DNA]</scope>
    <source>
        <strain>Patoc 1 / ATCC 23582 / Paris</strain>
    </source>
</reference>
<name>UPPP_LEPBP</name>
<proteinExistence type="inferred from homology"/>
<protein>
    <recommendedName>
        <fullName evidence="1">Undecaprenyl-diphosphatase</fullName>
        <ecNumber evidence="1">3.6.1.27</ecNumber>
    </recommendedName>
    <alternativeName>
        <fullName evidence="1">Bacitracin resistance protein</fullName>
    </alternativeName>
    <alternativeName>
        <fullName evidence="1">Undecaprenyl pyrophosphate phosphatase</fullName>
    </alternativeName>
</protein>
<comment type="function">
    <text evidence="1">Catalyzes the dephosphorylation of undecaprenyl diphosphate (UPP). Confers resistance to bacitracin.</text>
</comment>
<comment type="catalytic activity">
    <reaction evidence="1">
        <text>di-trans,octa-cis-undecaprenyl diphosphate + H2O = di-trans,octa-cis-undecaprenyl phosphate + phosphate + H(+)</text>
        <dbReference type="Rhea" id="RHEA:28094"/>
        <dbReference type="ChEBI" id="CHEBI:15377"/>
        <dbReference type="ChEBI" id="CHEBI:15378"/>
        <dbReference type="ChEBI" id="CHEBI:43474"/>
        <dbReference type="ChEBI" id="CHEBI:58405"/>
        <dbReference type="ChEBI" id="CHEBI:60392"/>
        <dbReference type="EC" id="3.6.1.27"/>
    </reaction>
</comment>
<comment type="subcellular location">
    <subcellularLocation>
        <location evidence="1">Cell inner membrane</location>
        <topology evidence="1">Multi-pass membrane protein</topology>
    </subcellularLocation>
</comment>
<comment type="miscellaneous">
    <text>Bacitracin is thought to be involved in the inhibition of peptidoglycan synthesis by sequestering undecaprenyl diphosphate, thereby reducing the pool of lipid carrier available.</text>
</comment>
<comment type="similarity">
    <text evidence="1">Belongs to the UppP family.</text>
</comment>
<organism>
    <name type="scientific">Leptospira biflexa serovar Patoc (strain Patoc 1 / ATCC 23582 / Paris)</name>
    <dbReference type="NCBI Taxonomy" id="456481"/>
    <lineage>
        <taxon>Bacteria</taxon>
        <taxon>Pseudomonadati</taxon>
        <taxon>Spirochaetota</taxon>
        <taxon>Spirochaetia</taxon>
        <taxon>Leptospirales</taxon>
        <taxon>Leptospiraceae</taxon>
        <taxon>Leptospira</taxon>
    </lineage>
</organism>
<feature type="chain" id="PRO_1000197380" description="Undecaprenyl-diphosphatase">
    <location>
        <begin position="1"/>
        <end position="279"/>
    </location>
</feature>
<feature type="transmembrane region" description="Helical" evidence="1">
    <location>
        <begin position="17"/>
        <end position="37"/>
    </location>
</feature>
<feature type="transmembrane region" description="Helical" evidence="1">
    <location>
        <begin position="46"/>
        <end position="66"/>
    </location>
</feature>
<feature type="transmembrane region" description="Helical" evidence="1">
    <location>
        <begin position="92"/>
        <end position="112"/>
    </location>
</feature>
<feature type="transmembrane region" description="Helical" evidence="1">
    <location>
        <begin position="123"/>
        <end position="143"/>
    </location>
</feature>
<feature type="transmembrane region" description="Helical" evidence="1">
    <location>
        <begin position="156"/>
        <end position="176"/>
    </location>
</feature>
<feature type="transmembrane region" description="Helical" evidence="1">
    <location>
        <begin position="197"/>
        <end position="217"/>
    </location>
</feature>
<feature type="transmembrane region" description="Helical" evidence="1">
    <location>
        <begin position="226"/>
        <end position="246"/>
    </location>
</feature>
<feature type="transmembrane region" description="Helical" evidence="1">
    <location>
        <begin position="257"/>
        <end position="277"/>
    </location>
</feature>
<evidence type="ECO:0000255" key="1">
    <source>
        <dbReference type="HAMAP-Rule" id="MF_01006"/>
    </source>
</evidence>
<gene>
    <name evidence="1" type="primary">uppP</name>
    <name type="ordered locus">LEPBI_I1821</name>
</gene>
<keyword id="KW-0046">Antibiotic resistance</keyword>
<keyword id="KW-0997">Cell inner membrane</keyword>
<keyword id="KW-1003">Cell membrane</keyword>
<keyword id="KW-0133">Cell shape</keyword>
<keyword id="KW-0961">Cell wall biogenesis/degradation</keyword>
<keyword id="KW-0378">Hydrolase</keyword>
<keyword id="KW-0472">Membrane</keyword>
<keyword id="KW-0573">Peptidoglycan synthesis</keyword>
<keyword id="KW-1185">Reference proteome</keyword>
<keyword id="KW-0812">Transmembrane</keyword>
<keyword id="KW-1133">Transmembrane helix</keyword>